<keyword id="KW-0067">ATP-binding</keyword>
<keyword id="KW-0175">Coiled coil</keyword>
<keyword id="KW-0378">Hydrolase</keyword>
<keyword id="KW-0460">Magnesium</keyword>
<keyword id="KW-0479">Metal-binding</keyword>
<keyword id="KW-0547">Nucleotide-binding</keyword>
<keyword id="KW-0539">Nucleus</keyword>
<keyword id="KW-1185">Reference proteome</keyword>
<keyword id="KW-0943">RNA-mediated gene silencing</keyword>
<gene>
    <name evidence="10" type="primary">morc-1</name>
    <name evidence="10" type="ORF">ZC155.3</name>
</gene>
<sequence length="845" mass="95793">MPNDTNGDDYKKLEKASVNLNFLKSNSHTHIGPLSAIAELVDNAYDADARDLHIDFLDINNEQFLELRDDGLGMAREEALHAITFGHSAKCSYKIGRYGNGLKSGAFHLGRELLLVTKKDGIITALLISHRFHEDQGLTNSVFVPCPSFDLDGIPICQTESEKDRFNLEMKIIGKYAPLGSRTLAELADKITGSTGTIIIIGNLRRSVTGELAINTTKDPTDIIVDSGEENKPWRESLRKYLEFIYLKPRMRIHVRGEQVLPKRISENWIAKKQQLISGDQFTAAYNKILDEKNETVKKCEEEKALVMSEIGGTNYTSVRREDRANQKSLRLRVDTSQKNLDSAIADRDAFKKEGKSEKSFHLNMGIETKDRSNNGIHFYINNRLILWGNKEAKFFSKFANSIGISMFLSLDYSLFSAAQNKQGFDHVKDFQVLVRKCNDALRDYSMYLEKSWIPTHLKNTWNVRIYEGDDVWAVLWGVYGYNNTTSTTCVQTHDSARDQVMWTTCGIWKLCQMCRTWIKASRPNEIVGSNDDFFCCENVNHHGCRTIVAEDNDFSKLPEKYDHILPQKRLTNSAPSSSDSQNSIRSASSCSSSSRLLNVAKIESHERIHSSTGGHRLGESFSTTSVKMEPIPNNAHDSHIAEVQRRHSTGRAISPAVSEISRRAGTAPSSQLDMIMGEESDESQEALTIRAPRQRAKRPIERVSRRNRRDQSDDDSDSENEERYATAPKKSKVKGKAVVRAPKMTREKWLEEMLNQFLTAHGEQPLPKNGQRDFDPTNIVEQTSRRNFKNNQRIVDAQQAIMRQIGSVLDHLKRNPTHNFKIPASGTVEEKLKNIEHQIKGKKK</sequence>
<dbReference type="EC" id="3.6.1.-" evidence="1"/>
<dbReference type="EMBL" id="BX284603">
    <property type="protein sequence ID" value="CCD66674.1"/>
    <property type="molecule type" value="Genomic_DNA"/>
</dbReference>
<dbReference type="RefSeq" id="NP_498104.1">
    <property type="nucleotide sequence ID" value="NM_065703.7"/>
</dbReference>
<dbReference type="SMR" id="Q23243"/>
<dbReference type="FunCoup" id="Q23243">
    <property type="interactions" value="904"/>
</dbReference>
<dbReference type="STRING" id="6239.ZC155.3.1"/>
<dbReference type="PaxDb" id="6239-ZC155.3"/>
<dbReference type="PeptideAtlas" id="Q23243"/>
<dbReference type="EnsemblMetazoa" id="ZC155.3.1">
    <property type="protein sequence ID" value="ZC155.3.1"/>
    <property type="gene ID" value="WBGene00022531"/>
</dbReference>
<dbReference type="GeneID" id="175711"/>
<dbReference type="KEGG" id="cel:CELE_ZC155.3"/>
<dbReference type="UCSC" id="ZC155.3">
    <property type="organism name" value="c. elegans"/>
</dbReference>
<dbReference type="AGR" id="WB:WBGene00022531"/>
<dbReference type="CTD" id="175711"/>
<dbReference type="WormBase" id="ZC155.3">
    <property type="protein sequence ID" value="CE23442"/>
    <property type="gene ID" value="WBGene00022531"/>
    <property type="gene designation" value="morc-1"/>
</dbReference>
<dbReference type="eggNOG" id="KOG1845">
    <property type="taxonomic scope" value="Eukaryota"/>
</dbReference>
<dbReference type="GeneTree" id="ENSGT00940000153998"/>
<dbReference type="HOGENOM" id="CLU_337149_0_0_1"/>
<dbReference type="InParanoid" id="Q23243"/>
<dbReference type="OMA" id="SHTHIGP"/>
<dbReference type="OrthoDB" id="1885370at2759"/>
<dbReference type="PhylomeDB" id="Q23243"/>
<dbReference type="Reactome" id="R-CEL-75105">
    <property type="pathway name" value="Fatty acyl-CoA biosynthesis"/>
</dbReference>
<dbReference type="PRO" id="PR:Q23243"/>
<dbReference type="Proteomes" id="UP000001940">
    <property type="component" value="Chromosome III"/>
</dbReference>
<dbReference type="Bgee" id="WBGene00022531">
    <property type="expression patterns" value="Expressed in adult organism and 4 other cell types or tissues"/>
</dbReference>
<dbReference type="GO" id="GO:0016604">
    <property type="term" value="C:nuclear body"/>
    <property type="evidence" value="ECO:0000314"/>
    <property type="project" value="UniProtKB"/>
</dbReference>
<dbReference type="GO" id="GO:0005634">
    <property type="term" value="C:nucleus"/>
    <property type="evidence" value="ECO:0000318"/>
    <property type="project" value="GO_Central"/>
</dbReference>
<dbReference type="GO" id="GO:0005524">
    <property type="term" value="F:ATP binding"/>
    <property type="evidence" value="ECO:0007669"/>
    <property type="project" value="UniProtKB-KW"/>
</dbReference>
<dbReference type="GO" id="GO:0016887">
    <property type="term" value="F:ATP hydrolysis activity"/>
    <property type="evidence" value="ECO:0007669"/>
    <property type="project" value="RHEA"/>
</dbReference>
<dbReference type="GO" id="GO:0061776">
    <property type="term" value="F:ATP-dependent topological DNA co-entrapment activity"/>
    <property type="evidence" value="ECO:0000314"/>
    <property type="project" value="UniProtKB"/>
</dbReference>
<dbReference type="GO" id="GO:0003677">
    <property type="term" value="F:DNA binding"/>
    <property type="evidence" value="ECO:0000314"/>
    <property type="project" value="UniProtKB"/>
</dbReference>
<dbReference type="GO" id="GO:0046872">
    <property type="term" value="F:metal ion binding"/>
    <property type="evidence" value="ECO:0007669"/>
    <property type="project" value="UniProtKB-KW"/>
</dbReference>
<dbReference type="GO" id="GO:0006265">
    <property type="term" value="P:DNA topological change"/>
    <property type="evidence" value="ECO:0000314"/>
    <property type="project" value="UniProtKB"/>
</dbReference>
<dbReference type="GO" id="GO:0031047">
    <property type="term" value="P:regulatory ncRNA-mediated gene silencing"/>
    <property type="evidence" value="ECO:0007669"/>
    <property type="project" value="UniProtKB-KW"/>
</dbReference>
<dbReference type="CDD" id="cd16931">
    <property type="entry name" value="HATPase_MORC-like"/>
    <property type="match status" value="1"/>
</dbReference>
<dbReference type="Gene3D" id="3.30.565.10">
    <property type="entry name" value="Histidine kinase-like ATPase, C-terminal domain"/>
    <property type="match status" value="1"/>
</dbReference>
<dbReference type="InterPro" id="IPR036890">
    <property type="entry name" value="HATPase_C_sf"/>
</dbReference>
<dbReference type="PANTHER" id="PTHR23337:SF3">
    <property type="entry name" value="MORC FAMILY CW-TYPE ZINC FINGER 2"/>
    <property type="match status" value="1"/>
</dbReference>
<dbReference type="PANTHER" id="PTHR23337">
    <property type="entry name" value="ZINC FINGER CW-TYPE COILED-COIL DOMAIN PROTEIN 1"/>
    <property type="match status" value="1"/>
</dbReference>
<dbReference type="Pfam" id="PF13589">
    <property type="entry name" value="HATPase_c_3"/>
    <property type="match status" value="1"/>
</dbReference>
<dbReference type="SUPFAM" id="SSF55874">
    <property type="entry name" value="ATPase domain of HSP90 chaperone/DNA topoisomerase II/histidine kinase"/>
    <property type="match status" value="1"/>
</dbReference>
<feature type="chain" id="PRO_0000441621" description="ATPase morc-1" evidence="8">
    <location>
        <begin position="1"/>
        <end position="845"/>
    </location>
</feature>
<feature type="region of interest" description="Disordered" evidence="3">
    <location>
        <begin position="566"/>
        <end position="590"/>
    </location>
</feature>
<feature type="region of interest" description="Disordered" evidence="3">
    <location>
        <begin position="628"/>
        <end position="739"/>
    </location>
</feature>
<feature type="coiled-coil region" evidence="2">
    <location>
        <begin position="284"/>
        <end position="311"/>
    </location>
</feature>
<feature type="compositionally biased region" description="Low complexity" evidence="3">
    <location>
        <begin position="574"/>
        <end position="590"/>
    </location>
</feature>
<feature type="compositionally biased region" description="Basic and acidic residues" evidence="3">
    <location>
        <begin position="637"/>
        <end position="646"/>
    </location>
</feature>
<feature type="binding site" evidence="1">
    <location>
        <position position="43"/>
    </location>
    <ligand>
        <name>ATP</name>
        <dbReference type="ChEBI" id="CHEBI:30616"/>
    </ligand>
</feature>
<feature type="binding site" evidence="1">
    <location>
        <position position="43"/>
    </location>
    <ligand>
        <name>Mg(2+)</name>
        <dbReference type="ChEBI" id="CHEBI:18420"/>
    </ligand>
</feature>
<feature type="binding site" evidence="1">
    <location>
        <begin position="88"/>
        <end position="90"/>
    </location>
    <ligand>
        <name>ATP</name>
        <dbReference type="ChEBI" id="CHEBI:30616"/>
    </ligand>
</feature>
<feature type="binding site" evidence="1">
    <location>
        <begin position="97"/>
        <end position="103"/>
    </location>
    <ligand>
        <name>ATP</name>
        <dbReference type="ChEBI" id="CHEBI:30616"/>
    </ligand>
</feature>
<feature type="binding site" evidence="1">
    <location>
        <position position="422"/>
    </location>
    <ligand>
        <name>ATP</name>
        <dbReference type="ChEBI" id="CHEBI:30616"/>
    </ligand>
</feature>
<feature type="mutagenesis site" description="Hypomorphic allele which is overexpressed relative to wild-type. Progressive germline mortality, resistant to nuclear RNAi and displays defective RNAi inheritance." evidence="6">
    <original>E</original>
    <variation>A</variation>
    <location>
        <position position="39"/>
    </location>
</feature>
<proteinExistence type="evidence at protein level"/>
<accession>Q23243</accession>
<organism evidence="9">
    <name type="scientific">Caenorhabditis elegans</name>
    <dbReference type="NCBI Taxonomy" id="6239"/>
    <lineage>
        <taxon>Eukaryota</taxon>
        <taxon>Metazoa</taxon>
        <taxon>Ecdysozoa</taxon>
        <taxon>Nematoda</taxon>
        <taxon>Chromadorea</taxon>
        <taxon>Rhabditida</taxon>
        <taxon>Rhabditina</taxon>
        <taxon>Rhabditomorpha</taxon>
        <taxon>Rhabditoidea</taxon>
        <taxon>Rhabditidae</taxon>
        <taxon>Peloderinae</taxon>
        <taxon>Caenorhabditis</taxon>
    </lineage>
</organism>
<reference evidence="9" key="1">
    <citation type="journal article" date="1998" name="Science">
        <title>Genome sequence of the nematode C. elegans: a platform for investigating biology.</title>
        <authorList>
            <consortium name="The C. elegans sequencing consortium"/>
        </authorList>
    </citation>
    <scope>NUCLEOTIDE SEQUENCE [LARGE SCALE GENOMIC DNA]</scope>
    <source>
        <strain evidence="9">Bristol N2</strain>
    </source>
</reference>
<reference evidence="8" key="2">
    <citation type="journal article" date="2012" name="Science">
        <title>MORC family ATPases required for heterochromatin condensation and gene silencing.</title>
        <authorList>
            <person name="Moissiard G."/>
            <person name="Cokus S.J."/>
            <person name="Cary J."/>
            <person name="Feng S."/>
            <person name="Billi A.C."/>
            <person name="Stroud H."/>
            <person name="Husmann D."/>
            <person name="Zhan Y."/>
            <person name="Lajoie B.R."/>
            <person name="McCord R.P."/>
            <person name="Hale C.J."/>
            <person name="Feng W."/>
            <person name="Michaels S.D."/>
            <person name="Frand A.R."/>
            <person name="Pellegrini M."/>
            <person name="Dekker J."/>
            <person name="Kim J.K."/>
            <person name="Jacobsen S.E."/>
        </authorList>
    </citation>
    <scope>FUNCTION</scope>
    <scope>DISRUPTION PHENOTYPE</scope>
</reference>
<reference evidence="8" key="3">
    <citation type="journal article" date="2017" name="Dev. Cell">
        <title>MORC-1 integrates nuclear RNAi and transgenerational chromatin architecture to promote germline immortality.</title>
        <authorList>
            <person name="Weiser N.E."/>
            <person name="Yang D.X."/>
            <person name="Feng S."/>
            <person name="Kalinava N."/>
            <person name="Brown K.C."/>
            <person name="Khanikar J."/>
            <person name="Freeberg M.A."/>
            <person name="Snyder M.J."/>
            <person name="Csankovszki G."/>
            <person name="Chan R.C."/>
            <person name="Gu S.G."/>
            <person name="Montgomery T.A."/>
            <person name="Jacobsen S.E."/>
            <person name="Kim J.K."/>
        </authorList>
    </citation>
    <scope>FUNCTION</scope>
    <scope>SUBCELLULAR LOCATION</scope>
    <scope>TISSUE SPECIFICITY</scope>
    <scope>DISRUPTION PHENOTYPE</scope>
    <scope>MUTAGENESIS OF GLU-39</scope>
</reference>
<reference evidence="8" key="4">
    <citation type="journal article" date="2017" name="Genetics">
        <title>Identification and characterization of Caenorhabditis elegans RNAi inheritance machinery.</title>
        <authorList>
            <person name="Spracklin G."/>
            <person name="Fields B."/>
            <person name="Wan G."/>
            <person name="Vijayendran D."/>
            <person name="Wallig A."/>
            <person name="Shukla A."/>
            <person name="Kennedy S."/>
        </authorList>
    </citation>
    <scope>FUNCTION</scope>
    <scope>DISRUPTION PHENOTYPE</scope>
</reference>
<reference key="5">
    <citation type="journal article" date="2019" name="Mol. Cell">
        <title>The Gene-Silencing Protein MORC-1 Topologically Entraps DNA and Forms Multimeric Assemblies to Cause DNA Compaction.</title>
        <authorList>
            <person name="Kim H."/>
            <person name="Yen L."/>
            <person name="Wongpalee S.P."/>
            <person name="Kirshner J.A."/>
            <person name="Mehta N."/>
            <person name="Xue Y."/>
            <person name="Johnston J.B."/>
            <person name="Burlingame A.L."/>
            <person name="Kim J.K."/>
            <person name="Loparo J.J."/>
            <person name="Jacobsen S.E."/>
        </authorList>
    </citation>
    <scope>FUNCTION</scope>
    <scope>SUBUNIT</scope>
    <scope>SUBCELLULAR LOCATION</scope>
</reference>
<name>MORC1_CAEEL</name>
<protein>
    <recommendedName>
        <fullName evidence="8">ATPase morc-1</fullName>
        <ecNumber evidence="1">3.6.1.-</ecNumber>
    </recommendedName>
</protein>
<comment type="function">
    <text evidence="4 5 6 7">Binds non-specifically to DNA and forms static foci which grow by recruiting other morc-1 molecules, and thereby stimulates conformational changes and compaction of DNA, which appears to be enhanced by ATP-binding, but does not require ATP activity (PubMed:31442422). Preferentially binds to long DNAs (PubMed:31442422). Compacts and entraps segments of DNA by sequentially forming loops along the DNA, beginning at the free ends of single- and double-tethered DNA (PubMed:31442422). Does not extrude the DNA loops on compacted double-tethered DNA (PubMed:31442422). Involved in gene silencing (PubMed:22555433). Plays a role in germline RNA interference (RNAi), and in particular, the silencing of endogenous small interfering RNA (endo-siRNA) target genes (PubMed:28535375). May play a role in heterochromatin localization and condensation, and the siRNAi-directed trimethylation of 'Lys-9' of histone H3 in hermaphrodite X chromosomes (PubMed:28535375). Promotes transgenerational epigenetic inheritance and germline immortality (PubMed:28533440, PubMed:28535375).</text>
</comment>
<comment type="catalytic activity">
    <reaction evidence="1">
        <text>ATP + H2O = ADP + phosphate + H(+)</text>
        <dbReference type="Rhea" id="RHEA:13065"/>
        <dbReference type="ChEBI" id="CHEBI:15377"/>
        <dbReference type="ChEBI" id="CHEBI:15378"/>
        <dbReference type="ChEBI" id="CHEBI:30616"/>
        <dbReference type="ChEBI" id="CHEBI:43474"/>
        <dbReference type="ChEBI" id="CHEBI:456216"/>
    </reaction>
</comment>
<comment type="subunit">
    <text evidence="7">Predominantly forms monomers and dimers, but multimerizes to form trimers and tetramers upon DNA binding.</text>
</comment>
<comment type="subcellular location">
    <subcellularLocation>
        <location evidence="6">Nucleus</location>
    </subcellularLocation>
    <subcellularLocation>
        <location evidence="7">Nucleus</location>
        <location evidence="7">Nuclear body</location>
    </subcellularLocation>
    <text evidence="7">Localizes to punctate nuclear bodies in germline stem cells and gonadal meiotic nuclei.</text>
</comment>
<comment type="tissue specificity">
    <text evidence="6">Expressed in germline and somatic cells.</text>
</comment>
<comment type="disruption phenotype">
    <text evidence="4 5 6">Mortal germline (Mrt) phenotype in which there is a progressive decline in fertility with each generation at 25 degrees Celsius culminating in complete sterility after five to six generations (PubMed:28533440, PubMed:28535375). Resistant to nuclear RNAi and defective RNAi inheritance (PubMed:28535375). Reduced trimethylation of 'Lys-9' of histone H3 at endogenous siRNA-directed targets, a small degree of irregularly localized heterochromatin, with 70% correctly localized, defective chromatin compaction in hermaphrodite X chromosomes (PubMed:28535375). Double knockout with the histone methyltransferase met-1 rescues the progressive germline mortality defect in the morc-1 single mutant (PubMed:28535375). RNAi-mediated knockdown results in defective gene silencing (PubMed:22555433).</text>
</comment>
<evidence type="ECO:0000250" key="1">
    <source>
        <dbReference type="UniProtKB" id="Q9Y6X9"/>
    </source>
</evidence>
<evidence type="ECO:0000255" key="2"/>
<evidence type="ECO:0000256" key="3">
    <source>
        <dbReference type="SAM" id="MobiDB-lite"/>
    </source>
</evidence>
<evidence type="ECO:0000269" key="4">
    <source>
    </source>
</evidence>
<evidence type="ECO:0000269" key="5">
    <source>
    </source>
</evidence>
<evidence type="ECO:0000269" key="6">
    <source>
    </source>
</evidence>
<evidence type="ECO:0000269" key="7">
    <source>
    </source>
</evidence>
<evidence type="ECO:0000305" key="8"/>
<evidence type="ECO:0000312" key="9">
    <source>
        <dbReference type="Proteomes" id="UP000001940"/>
    </source>
</evidence>
<evidence type="ECO:0000312" key="10">
    <source>
        <dbReference type="WormBase" id="ZC155.3"/>
    </source>
</evidence>